<feature type="chain" id="PRO_0000053587" description="Nuclear receptor subfamily 2 group C member 1">
    <location>
        <begin position="1"/>
        <end position="590"/>
    </location>
</feature>
<feature type="domain" description="NR LBD" evidence="5">
    <location>
        <begin position="333"/>
        <end position="577"/>
    </location>
</feature>
<feature type="DNA-binding region" description="Nuclear receptor" evidence="4">
    <location>
        <begin position="98"/>
        <end position="173"/>
    </location>
</feature>
<feature type="zinc finger region" description="NR C4-type" evidence="4">
    <location>
        <begin position="101"/>
        <end position="121"/>
    </location>
</feature>
<feature type="zinc finger region" description="NR C4-type" evidence="4">
    <location>
        <begin position="137"/>
        <end position="156"/>
    </location>
</feature>
<feature type="region of interest" description="Required for interaction with KAT2B">
    <location>
        <begin position="1"/>
        <end position="166"/>
    </location>
</feature>
<feature type="region of interest" description="Required for interaction with NRIP1">
    <location>
        <begin position="571"/>
        <end position="590"/>
    </location>
</feature>
<feature type="modified residue" description="Phosphoserine" evidence="11">
    <location>
        <position position="185"/>
    </location>
</feature>
<feature type="modified residue" description="Phosphoserine" evidence="16">
    <location>
        <position position="203"/>
    </location>
</feature>
<feature type="modified residue" description="Phosphothreonine" evidence="16">
    <location>
        <position position="208"/>
    </location>
</feature>
<feature type="modified residue" description="Phosphothreonine; by MAPK1" evidence="16">
    <location>
        <position position="210"/>
    </location>
</feature>
<feature type="modified residue" description="Phosphoserine; by PKC" evidence="9">
    <location>
        <position position="461"/>
    </location>
</feature>
<feature type="modified residue" description="Phosphoserine; by PKC" evidence="9">
    <location>
        <position position="568"/>
    </location>
</feature>
<feature type="cross-link" description="Glycyl lysine isopeptide (Lys-Gly) (interchain with G-Cter in SUMO); alternate" evidence="12">
    <location>
        <position position="238"/>
    </location>
</feature>
<feature type="cross-link" description="Glycyl lysine isopeptide (Lys-Gly) (interchain with G-Cter in SUMO2); alternate" evidence="2">
    <location>
        <position position="238"/>
    </location>
</feature>
<feature type="cross-link" description="Glycyl lysine isopeptide (Lys-Gly) (interchain with G-Cter in SUMO2)" evidence="2">
    <location>
        <position position="575"/>
    </location>
</feature>
<feature type="splice variant" id="VSP_051921" description="In isoform 2." evidence="26">
    <original>SAGLLDSGMFVNIHPSGIKTEPAMLMAPDKAESCQGD</original>
    <variation>CPAAISASFASLPRSTETKTCASFVAGQLDCWIQECL</variation>
    <location>
        <begin position="220"/>
        <end position="256"/>
    </location>
</feature>
<feature type="splice variant" id="VSP_051922" description="In isoform 2." evidence="26">
    <location>
        <begin position="257"/>
        <end position="590"/>
    </location>
</feature>
<feature type="sequence variant" description="In strain: CD-1." evidence="20 21">
    <original>I</original>
    <variation>M</variation>
    <location>
        <position position="29"/>
    </location>
</feature>
<feature type="sequence variant" description="In strain: CD-1." evidence="20 21">
    <original>I</original>
    <variation>M</variation>
    <location>
        <position position="145"/>
    </location>
</feature>
<feature type="sequence variant" description="In strain: CD-1." evidence="20 21">
    <original>FGAFHHDIQ</original>
    <variation>SVLFIMIFK</variation>
    <location>
        <begin position="296"/>
        <end position="304"/>
    </location>
</feature>
<feature type="sequence variant" description="In strain: CD-1." evidence="20 21">
    <original>V</original>
    <variation>I</variation>
    <location>
        <position position="361"/>
    </location>
</feature>
<feature type="sequence variant" description="In strain: CD-1." evidence="20 21">
    <original>V</original>
    <variation>A</variation>
    <location>
        <position position="377"/>
    </location>
</feature>
<feature type="sequence variant" description="In strain: CD-1." evidence="20 21">
    <original>P</original>
    <variation>A</variation>
    <location>
        <position position="456"/>
    </location>
</feature>
<feature type="mutagenesis site" description="No effect on sumoylation." evidence="12">
    <original>K</original>
    <variation>A</variation>
    <location>
        <position position="167"/>
    </location>
</feature>
<feature type="mutagenesis site" description="No effect on sumoylation nor on DNA-binding and little effect on binding KAT2B. Greatly reduced DNA-binding, binding to KAT2B and activation of the RARB promoter; when associated with A-185." evidence="11 16">
    <original>S</original>
    <variation>A</variation>
    <location>
        <position position="170"/>
    </location>
</feature>
<feature type="mutagenesis site" description="No effect on sumoylation and little effect on binding KAT2B. Some reduced DNA-binding. Greatly reduced DNA-binding, binding to KAT2B and activation of the RARB promoter; when associated with A-170." evidence="11 16">
    <original>S</original>
    <variation>A</variation>
    <location>
        <position position="185"/>
    </location>
</feature>
<feature type="mutagenesis site" description="No effect on sumoylation." evidence="16">
    <original>S</original>
    <variation>A</variation>
    <location>
        <position position="203"/>
    </location>
</feature>
<feature type="mutagenesis site" description="No effect on sumoylation." evidence="16">
    <original>T</original>
    <variation>A</variation>
    <location>
        <position position="208"/>
    </location>
</feature>
<feature type="mutagenesis site" description="Abolishes sumoylation. No repression of OCT4 gene expression with or without retinoic acid and enhanced interaction with KAT2B and HDAC3. Abolishes interaction with HDAC3 and PML association; when associated with R-238." evidence="16">
    <original>T</original>
    <variation>A</variation>
    <location>
        <position position="210"/>
    </location>
</feature>
<feature type="mutagenesis site" description="Sumoylated. Repressed OCT4 gene expression. Enhanced interaction with KAT2B; when associated with R-238." evidence="16">
    <original>T</original>
    <variation>E</variation>
    <location>
        <position position="210"/>
    </location>
</feature>
<feature type="mutagenesis site" description="Abolishes sumoylation. Strongly associated with PML nuclear bodies. No effect on activation of OCT4 but activation not suppressed by additional SUMO1. Increased binding to KAT2B and reduced binding to NRIP1. Abolishes PML association; when associated with A-210." evidence="12 16">
    <original>K</original>
    <variation>A</variation>
    <location>
        <position position="238"/>
    </location>
</feature>
<feature type="mutagenesis site" description="Abolishes sumoylation. No effect on activation of OCT4 but activation not suppressed by additional SUMO1. Enhanced interaction with KAT2B; when associated with A-210 or E-210." evidence="12 16">
    <original>K</original>
    <variation>R</variation>
    <location>
        <position position="238"/>
    </location>
</feature>
<feature type="mutagenesis site" description="Abolishes sumoylation." evidence="12">
    <original>E</original>
    <variation>A</variation>
    <location>
        <position position="240"/>
    </location>
</feature>
<feature type="mutagenesis site" description="Little effect on PKC-stimulated protein stability nor on activation of RARB reporter." evidence="16">
    <original>S</original>
    <variation>A</variation>
    <location>
        <position position="461"/>
    </location>
</feature>
<feature type="mutagenesis site" description="No effect on sumoylation." evidence="16">
    <original>S</original>
    <variation>A</variation>
    <location>
        <position position="461"/>
    </location>
</feature>
<feature type="mutagenesis site" description="Greatly reduced PKC-stimulated protein stability and activation of RARB reporter." evidence="16">
    <original>S</original>
    <variation>A</variation>
    <location>
        <position position="568"/>
    </location>
</feature>
<feature type="mutagenesis site" description="No effect on sumoylation." evidence="16">
    <original>S</original>
    <variation>A</variation>
    <location>
        <position position="568"/>
    </location>
</feature>
<feature type="mutagenesis site" description="No effect on sumoylation." evidence="12">
    <original>K</original>
    <variation>R</variation>
    <location>
        <position position="575"/>
    </location>
</feature>
<feature type="sequence conflict" description="In Ref. 4; CAA72244, 5; AAC29502 and 6; AAL31315." evidence="27" ref="4 5 6">
    <original>K</original>
    <variation>N</variation>
    <location>
        <position position="88"/>
    </location>
</feature>
<feature type="sequence conflict" description="In Ref. 5; AAC29502 and 6; AAL31315." evidence="27" ref="5 6">
    <original>D</original>
    <variation>N</variation>
    <location>
        <position position="200"/>
    </location>
</feature>
<feature type="sequence conflict" description="In Ref. 5; AAC29502 and 6; AAL31315." evidence="27" ref="5 6">
    <original>A</original>
    <variation>T</variation>
    <location>
        <position position="273"/>
    </location>
</feature>
<feature type="sequence conflict" description="In Ref. 1; AAC52787/AAC53253, 4; CAA72244 and 6; AAL31315." evidence="27" ref="1 4 6">
    <original>SA</original>
    <variation>TS</variation>
    <location>
        <begin position="326"/>
        <end position="327"/>
    </location>
</feature>
<feature type="sequence conflict" description="In Ref. 5; AAC29502 and 6; AAL31315." evidence="27" ref="5 6">
    <original>P</original>
    <variation>S</variation>
    <location>
        <position position="331"/>
    </location>
</feature>
<feature type="sequence conflict" description="In Ref. 7; BAE27509." evidence="27" ref="7">
    <original>D</original>
    <variation>N</variation>
    <location>
        <position position="529"/>
    </location>
</feature>
<evidence type="ECO:0000250" key="1"/>
<evidence type="ECO:0000250" key="2">
    <source>
        <dbReference type="UniProtKB" id="P13056"/>
    </source>
</evidence>
<evidence type="ECO:0000255" key="3"/>
<evidence type="ECO:0000255" key="4">
    <source>
        <dbReference type="PROSITE-ProRule" id="PRU00407"/>
    </source>
</evidence>
<evidence type="ECO:0000255" key="5">
    <source>
        <dbReference type="PROSITE-ProRule" id="PRU01189"/>
    </source>
</evidence>
<evidence type="ECO:0000269" key="6">
    <source>
    </source>
</evidence>
<evidence type="ECO:0000269" key="7">
    <source>
    </source>
</evidence>
<evidence type="ECO:0000269" key="8">
    <source>
    </source>
</evidence>
<evidence type="ECO:0000269" key="9">
    <source>
    </source>
</evidence>
<evidence type="ECO:0000269" key="10">
    <source>
    </source>
</evidence>
<evidence type="ECO:0000269" key="11">
    <source>
    </source>
</evidence>
<evidence type="ECO:0000269" key="12">
    <source>
    </source>
</evidence>
<evidence type="ECO:0000269" key="13">
    <source>
    </source>
</evidence>
<evidence type="ECO:0000269" key="14">
    <source>
    </source>
</evidence>
<evidence type="ECO:0000269" key="15">
    <source>
    </source>
</evidence>
<evidence type="ECO:0000269" key="16">
    <source>
    </source>
</evidence>
<evidence type="ECO:0000269" key="17">
    <source>
    </source>
</evidence>
<evidence type="ECO:0000269" key="18">
    <source>
    </source>
</evidence>
<evidence type="ECO:0000269" key="19">
    <source>
    </source>
</evidence>
<evidence type="ECO:0000269" key="20">
    <source>
    </source>
</evidence>
<evidence type="ECO:0000269" key="21">
    <source>
    </source>
</evidence>
<evidence type="ECO:0000269" key="22">
    <source>
    </source>
</evidence>
<evidence type="ECO:0000269" key="23">
    <source>
    </source>
</evidence>
<evidence type="ECO:0000269" key="24">
    <source>
    </source>
</evidence>
<evidence type="ECO:0000269" key="25">
    <source>
    </source>
</evidence>
<evidence type="ECO:0000303" key="26">
    <source>
    </source>
</evidence>
<evidence type="ECO:0000305" key="27"/>
<evidence type="ECO:0000312" key="28">
    <source>
        <dbReference type="EMBL" id="AAC29502.1"/>
    </source>
</evidence>
<evidence type="ECO:0000312" key="29">
    <source>
        <dbReference type="EMBL" id="AAC52787.1"/>
    </source>
</evidence>
<evidence type="ECO:0000312" key="30">
    <source>
        <dbReference type="EMBL" id="AAC53253.1"/>
    </source>
</evidence>
<evidence type="ECO:0000312" key="31">
    <source>
        <dbReference type="EMBL" id="AAH94580.1"/>
    </source>
</evidence>
<evidence type="ECO:0000312" key="32">
    <source>
        <dbReference type="EMBL" id="AAL31315.1"/>
    </source>
</evidence>
<evidence type="ECO:0000312" key="33">
    <source>
        <dbReference type="EMBL" id="BAE28842.1"/>
    </source>
</evidence>
<evidence type="ECO:0000312" key="34">
    <source>
        <dbReference type="EMBL" id="CAA72244.1"/>
    </source>
</evidence>
<evidence type="ECO:0000312" key="35">
    <source>
        <dbReference type="MGI" id="MGI:1352465"/>
    </source>
</evidence>
<keyword id="KW-0010">Activator</keyword>
<keyword id="KW-0025">Alternative splicing</keyword>
<keyword id="KW-0238">DNA-binding</keyword>
<keyword id="KW-1017">Isopeptide bond</keyword>
<keyword id="KW-0479">Metal-binding</keyword>
<keyword id="KW-0539">Nucleus</keyword>
<keyword id="KW-0597">Phosphoprotein</keyword>
<keyword id="KW-0675">Receptor</keyword>
<keyword id="KW-1185">Reference proteome</keyword>
<keyword id="KW-0678">Repressor</keyword>
<keyword id="KW-0804">Transcription</keyword>
<keyword id="KW-0805">Transcription regulation</keyword>
<keyword id="KW-0832">Ubl conjugation</keyword>
<keyword id="KW-0862">Zinc</keyword>
<keyword id="KW-0863">Zinc-finger</keyword>
<proteinExistence type="evidence at protein level"/>
<organism>
    <name type="scientific">Mus musculus</name>
    <name type="common">Mouse</name>
    <dbReference type="NCBI Taxonomy" id="10090"/>
    <lineage>
        <taxon>Eukaryota</taxon>
        <taxon>Metazoa</taxon>
        <taxon>Chordata</taxon>
        <taxon>Craniata</taxon>
        <taxon>Vertebrata</taxon>
        <taxon>Euteleostomi</taxon>
        <taxon>Mammalia</taxon>
        <taxon>Eutheria</taxon>
        <taxon>Euarchontoglires</taxon>
        <taxon>Glires</taxon>
        <taxon>Rodentia</taxon>
        <taxon>Myomorpha</taxon>
        <taxon>Muroidea</taxon>
        <taxon>Muridae</taxon>
        <taxon>Murinae</taxon>
        <taxon>Mus</taxon>
        <taxon>Mus</taxon>
    </lineage>
</organism>
<dbReference type="EMBL" id="U28280">
    <property type="protein sequence ID" value="AAC53253.1"/>
    <property type="molecule type" value="Genomic_DNA"/>
</dbReference>
<dbReference type="EMBL" id="U28269">
    <property type="protein sequence ID" value="AAC53253.1"/>
    <property type="status" value="JOINED"/>
    <property type="molecule type" value="Genomic_DNA"/>
</dbReference>
<dbReference type="EMBL" id="U28270">
    <property type="protein sequence ID" value="AAC53253.1"/>
    <property type="status" value="JOINED"/>
    <property type="molecule type" value="Genomic_DNA"/>
</dbReference>
<dbReference type="EMBL" id="U28271">
    <property type="protein sequence ID" value="AAC53253.1"/>
    <property type="status" value="JOINED"/>
    <property type="molecule type" value="Genomic_DNA"/>
</dbReference>
<dbReference type="EMBL" id="U28272">
    <property type="protein sequence ID" value="AAC53253.1"/>
    <property type="status" value="JOINED"/>
    <property type="molecule type" value="Genomic_DNA"/>
</dbReference>
<dbReference type="EMBL" id="U28273">
    <property type="protein sequence ID" value="AAC53253.1"/>
    <property type="status" value="JOINED"/>
    <property type="molecule type" value="Genomic_DNA"/>
</dbReference>
<dbReference type="EMBL" id="U28274">
    <property type="protein sequence ID" value="AAC53253.1"/>
    <property type="status" value="JOINED"/>
    <property type="molecule type" value="Genomic_DNA"/>
</dbReference>
<dbReference type="EMBL" id="U28275">
    <property type="protein sequence ID" value="AAC53253.1"/>
    <property type="status" value="JOINED"/>
    <property type="molecule type" value="Genomic_DNA"/>
</dbReference>
<dbReference type="EMBL" id="U28276">
    <property type="protein sequence ID" value="AAC53253.1"/>
    <property type="status" value="JOINED"/>
    <property type="molecule type" value="Genomic_DNA"/>
</dbReference>
<dbReference type="EMBL" id="U28277">
    <property type="protein sequence ID" value="AAC53253.1"/>
    <property type="status" value="JOINED"/>
    <property type="molecule type" value="Genomic_DNA"/>
</dbReference>
<dbReference type="EMBL" id="U28278">
    <property type="protein sequence ID" value="AAC53253.1"/>
    <property type="status" value="JOINED"/>
    <property type="molecule type" value="Genomic_DNA"/>
</dbReference>
<dbReference type="EMBL" id="U28279">
    <property type="protein sequence ID" value="AAC53253.1"/>
    <property type="status" value="JOINED"/>
    <property type="molecule type" value="Genomic_DNA"/>
</dbReference>
<dbReference type="EMBL" id="U28265">
    <property type="protein sequence ID" value="AAC52787.1"/>
    <property type="molecule type" value="mRNA"/>
</dbReference>
<dbReference type="EMBL" id="Y11436">
    <property type="protein sequence ID" value="CAA72244.1"/>
    <property type="molecule type" value="mRNA"/>
</dbReference>
<dbReference type="EMBL" id="U30482">
    <property type="protein sequence ID" value="AAC29502.1"/>
    <property type="molecule type" value="mRNA"/>
</dbReference>
<dbReference type="EMBL" id="L26957">
    <property type="protein sequence ID" value="AAL31315.1"/>
    <property type="molecule type" value="mRNA"/>
</dbReference>
<dbReference type="EMBL" id="AK146891">
    <property type="protein sequence ID" value="BAE27509.1"/>
    <property type="molecule type" value="mRNA"/>
</dbReference>
<dbReference type="EMBL" id="AK149374">
    <property type="protein sequence ID" value="BAE28842.1"/>
    <property type="molecule type" value="mRNA"/>
</dbReference>
<dbReference type="EMBL" id="AC127596">
    <property type="status" value="NOT_ANNOTATED_CDS"/>
    <property type="molecule type" value="Genomic_DNA"/>
</dbReference>
<dbReference type="EMBL" id="AC138026">
    <property type="status" value="NOT_ANNOTATED_CDS"/>
    <property type="molecule type" value="Genomic_DNA"/>
</dbReference>
<dbReference type="EMBL" id="BC090662">
    <property type="protein sequence ID" value="AAH90662.1"/>
    <property type="molecule type" value="mRNA"/>
</dbReference>
<dbReference type="EMBL" id="BC094580">
    <property type="protein sequence ID" value="AAH94580.1"/>
    <property type="molecule type" value="mRNA"/>
</dbReference>
<dbReference type="CCDS" id="CCDS24131.1">
    <molecule id="Q505F1-1"/>
</dbReference>
<dbReference type="RefSeq" id="NP_035759.3">
    <molecule id="Q505F1-1"/>
    <property type="nucleotide sequence ID" value="NM_011629.3"/>
</dbReference>
<dbReference type="RefSeq" id="XP_006513655.1">
    <molecule id="Q505F1-1"/>
    <property type="nucleotide sequence ID" value="XM_006513592.4"/>
</dbReference>
<dbReference type="RefSeq" id="XP_030100925.1">
    <molecule id="Q505F1-1"/>
    <property type="nucleotide sequence ID" value="XM_030245065.2"/>
</dbReference>
<dbReference type="SMR" id="Q505F1"/>
<dbReference type="BioGRID" id="204299">
    <property type="interactions" value="3"/>
</dbReference>
<dbReference type="DIP" id="DIP-29275N"/>
<dbReference type="FunCoup" id="Q505F1">
    <property type="interactions" value="4707"/>
</dbReference>
<dbReference type="IntAct" id="Q505F1">
    <property type="interactions" value="7"/>
</dbReference>
<dbReference type="STRING" id="10090.ENSMUSP00000100927"/>
<dbReference type="iPTMnet" id="Q505F1"/>
<dbReference type="PhosphoSitePlus" id="Q505F1"/>
<dbReference type="SwissPalm" id="Q505F1"/>
<dbReference type="jPOST" id="Q505F1"/>
<dbReference type="PaxDb" id="10090-ENSMUSP00000100927"/>
<dbReference type="PeptideAtlas" id="Q505F1"/>
<dbReference type="ProteomicsDB" id="293719">
    <molecule id="Q505F1-1"/>
</dbReference>
<dbReference type="ProteomicsDB" id="293720">
    <molecule id="Q505F1-2"/>
</dbReference>
<dbReference type="Pumba" id="Q505F1"/>
<dbReference type="Antibodypedia" id="4166">
    <property type="antibodies" value="462 antibodies from 37 providers"/>
</dbReference>
<dbReference type="DNASU" id="22025"/>
<dbReference type="Ensembl" id="ENSMUST00000092213.11">
    <molecule id="Q505F1-1"/>
    <property type="protein sequence ID" value="ENSMUSP00000089858.5"/>
    <property type="gene ID" value="ENSMUSG00000005897.15"/>
</dbReference>
<dbReference type="Ensembl" id="ENSMUST00000099343.2">
    <molecule id="Q505F1-1"/>
    <property type="protein sequence ID" value="ENSMUSP00000096945.2"/>
    <property type="gene ID" value="ENSMUSG00000005897.15"/>
</dbReference>
<dbReference type="Ensembl" id="ENSMUST00000105290.9">
    <molecule id="Q505F1-1"/>
    <property type="protein sequence ID" value="ENSMUSP00000100927.3"/>
    <property type="gene ID" value="ENSMUSG00000005897.15"/>
</dbReference>
<dbReference type="GeneID" id="22025"/>
<dbReference type="KEGG" id="mmu:22025"/>
<dbReference type="UCSC" id="uc007gvo.2">
    <molecule id="Q505F1-1"/>
    <property type="organism name" value="mouse"/>
</dbReference>
<dbReference type="AGR" id="MGI:1352465"/>
<dbReference type="CTD" id="7181"/>
<dbReference type="MGI" id="MGI:1352465">
    <property type="gene designation" value="Nr2c1"/>
</dbReference>
<dbReference type="VEuPathDB" id="HostDB:ENSMUSG00000005897"/>
<dbReference type="eggNOG" id="KOG3575">
    <property type="taxonomic scope" value="Eukaryota"/>
</dbReference>
<dbReference type="GeneTree" id="ENSGT00940000158165"/>
<dbReference type="HOGENOM" id="CLU_007368_16_2_1"/>
<dbReference type="InParanoid" id="Q505F1"/>
<dbReference type="OMA" id="NCGELCV"/>
<dbReference type="OrthoDB" id="10024684at2759"/>
<dbReference type="PhylomeDB" id="Q505F1"/>
<dbReference type="TreeFam" id="TF316650"/>
<dbReference type="Reactome" id="R-MMU-383280">
    <property type="pathway name" value="Nuclear Receptor transcription pathway"/>
</dbReference>
<dbReference type="BioGRID-ORCS" id="22025">
    <property type="hits" value="4 hits in 81 CRISPR screens"/>
</dbReference>
<dbReference type="ChiTaRS" id="Nr2c1">
    <property type="organism name" value="mouse"/>
</dbReference>
<dbReference type="PRO" id="PR:Q505F1"/>
<dbReference type="Proteomes" id="UP000000589">
    <property type="component" value="Chromosome 10"/>
</dbReference>
<dbReference type="RNAct" id="Q505F1">
    <property type="molecule type" value="protein"/>
</dbReference>
<dbReference type="Bgee" id="ENSMUSG00000005897">
    <property type="expression patterns" value="Expressed in spermatid and 232 other cell types or tissues"/>
</dbReference>
<dbReference type="GO" id="GO:0005654">
    <property type="term" value="C:nucleoplasm"/>
    <property type="evidence" value="ECO:0000304"/>
    <property type="project" value="Reactome"/>
</dbReference>
<dbReference type="GO" id="GO:0005634">
    <property type="term" value="C:nucleus"/>
    <property type="evidence" value="ECO:0000314"/>
    <property type="project" value="UniProtKB"/>
</dbReference>
<dbReference type="GO" id="GO:0016605">
    <property type="term" value="C:PML body"/>
    <property type="evidence" value="ECO:0000314"/>
    <property type="project" value="UniProtKB"/>
</dbReference>
<dbReference type="GO" id="GO:0003677">
    <property type="term" value="F:DNA binding"/>
    <property type="evidence" value="ECO:0000314"/>
    <property type="project" value="UniProtKB"/>
</dbReference>
<dbReference type="GO" id="GO:0001227">
    <property type="term" value="F:DNA-binding transcription repressor activity, RNA polymerase II-specific"/>
    <property type="evidence" value="ECO:0000314"/>
    <property type="project" value="NTNU_SB"/>
</dbReference>
<dbReference type="GO" id="GO:0042826">
    <property type="term" value="F:histone deacetylase binding"/>
    <property type="evidence" value="ECO:0000353"/>
    <property type="project" value="UniProtKB"/>
</dbReference>
<dbReference type="GO" id="GO:0042803">
    <property type="term" value="F:protein homodimerization activity"/>
    <property type="evidence" value="ECO:0000353"/>
    <property type="project" value="UniProtKB"/>
</dbReference>
<dbReference type="GO" id="GO:0000978">
    <property type="term" value="F:RNA polymerase II cis-regulatory region sequence-specific DNA binding"/>
    <property type="evidence" value="ECO:0000314"/>
    <property type="project" value="NTNU_SB"/>
</dbReference>
<dbReference type="GO" id="GO:0008270">
    <property type="term" value="F:zinc ion binding"/>
    <property type="evidence" value="ECO:0007669"/>
    <property type="project" value="UniProtKB-KW"/>
</dbReference>
<dbReference type="GO" id="GO:0045892">
    <property type="term" value="P:negative regulation of DNA-templated transcription"/>
    <property type="evidence" value="ECO:0000314"/>
    <property type="project" value="UniProtKB"/>
</dbReference>
<dbReference type="GO" id="GO:0000122">
    <property type="term" value="P:negative regulation of transcription by RNA polymerase II"/>
    <property type="evidence" value="ECO:0000314"/>
    <property type="project" value="UniProtKB"/>
</dbReference>
<dbReference type="GO" id="GO:0048386">
    <property type="term" value="P:positive regulation of retinoic acid receptor signaling pathway"/>
    <property type="evidence" value="ECO:0000314"/>
    <property type="project" value="UniProtKB"/>
</dbReference>
<dbReference type="CDD" id="cd06967">
    <property type="entry name" value="NR_DBD_TR2_like"/>
    <property type="match status" value="1"/>
</dbReference>
<dbReference type="CDD" id="cd06952">
    <property type="entry name" value="NR_LBD_TR2_like"/>
    <property type="match status" value="1"/>
</dbReference>
<dbReference type="FunFam" id="1.10.565.10:FF:000012">
    <property type="entry name" value="Nuclear receptor subfamily 2 group C member 1"/>
    <property type="match status" value="1"/>
</dbReference>
<dbReference type="FunFam" id="3.30.50.10:FF:000015">
    <property type="entry name" value="Nuclear receptor subfamily 2, group C, member 1"/>
    <property type="match status" value="1"/>
</dbReference>
<dbReference type="Gene3D" id="3.30.50.10">
    <property type="entry name" value="Erythroid Transcription Factor GATA-1, subunit A"/>
    <property type="match status" value="1"/>
</dbReference>
<dbReference type="Gene3D" id="1.10.565.10">
    <property type="entry name" value="Retinoid X Receptor"/>
    <property type="match status" value="1"/>
</dbReference>
<dbReference type="InterPro" id="IPR035500">
    <property type="entry name" value="NHR-like_dom_sf"/>
</dbReference>
<dbReference type="InterPro" id="IPR048245">
    <property type="entry name" value="NR2C1/2-like_DBD"/>
</dbReference>
<dbReference type="InterPro" id="IPR048246">
    <property type="entry name" value="NR2C1/2-like_LBD"/>
</dbReference>
<dbReference type="InterPro" id="IPR000536">
    <property type="entry name" value="Nucl_hrmn_rcpt_lig-bd"/>
</dbReference>
<dbReference type="InterPro" id="IPR050274">
    <property type="entry name" value="Nuclear_hormone_rcpt_NR2"/>
</dbReference>
<dbReference type="InterPro" id="IPR001723">
    <property type="entry name" value="Nuclear_hrmn_rcpt"/>
</dbReference>
<dbReference type="InterPro" id="IPR001628">
    <property type="entry name" value="Znf_hrmn_rcpt"/>
</dbReference>
<dbReference type="InterPro" id="IPR013088">
    <property type="entry name" value="Znf_NHR/GATA"/>
</dbReference>
<dbReference type="PANTHER" id="PTHR24083">
    <property type="entry name" value="NUCLEAR HORMONE RECEPTOR"/>
    <property type="match status" value="1"/>
</dbReference>
<dbReference type="Pfam" id="PF00104">
    <property type="entry name" value="Hormone_recep"/>
    <property type="match status" value="1"/>
</dbReference>
<dbReference type="Pfam" id="PF00105">
    <property type="entry name" value="zf-C4"/>
    <property type="match status" value="1"/>
</dbReference>
<dbReference type="PRINTS" id="PR00398">
    <property type="entry name" value="STRDHORMONER"/>
</dbReference>
<dbReference type="PRINTS" id="PR00047">
    <property type="entry name" value="STROIDFINGER"/>
</dbReference>
<dbReference type="SMART" id="SM00430">
    <property type="entry name" value="HOLI"/>
    <property type="match status" value="1"/>
</dbReference>
<dbReference type="SMART" id="SM00399">
    <property type="entry name" value="ZnF_C4"/>
    <property type="match status" value="1"/>
</dbReference>
<dbReference type="SUPFAM" id="SSF57716">
    <property type="entry name" value="Glucocorticoid receptor-like (DNA-binding domain)"/>
    <property type="match status" value="1"/>
</dbReference>
<dbReference type="SUPFAM" id="SSF48508">
    <property type="entry name" value="Nuclear receptor ligand-binding domain"/>
    <property type="match status" value="1"/>
</dbReference>
<dbReference type="PROSITE" id="PS51843">
    <property type="entry name" value="NR_LBD"/>
    <property type="match status" value="1"/>
</dbReference>
<dbReference type="PROSITE" id="PS00031">
    <property type="entry name" value="NUCLEAR_REC_DBD_1"/>
    <property type="match status" value="1"/>
</dbReference>
<dbReference type="PROSITE" id="PS51030">
    <property type="entry name" value="NUCLEAR_REC_DBD_2"/>
    <property type="match status" value="1"/>
</dbReference>
<comment type="function">
    <text evidence="1 6 8 9 11 12 13 14 15 17 19 21 22 25">Orphan nuclear receptor. Binds the IR7 element in the promoter of its own gene in an autoregulatory negative feedback mechanism. Primarily repressor of a broad range of genes including ESR1 and RARB. Together with NR2C2, forms the core of the DRED (direct repeat erythroid-definitive) complex that represses embryonic and fetal globin transcription. Binds to hormone response elements (HREs) consisting of two 5'-AGGTCA-3' half site direct repeat consensus sequences (By similarity). Also activator of OCT4 gene expression. Plays a fundamental role in early embryogenesis and regulates embryonic stem cell proliferation and differentiation. Mediator of retinoic acid-regulated preadipocyte proliferation.</text>
</comment>
<comment type="subunit">
    <text evidence="1 6 11 12 16 18 25">Homodimer. Heterodimer; with NR2C2 which is required for chromatin remodeling and for binding to promoter regions such as globin DR1 repeats. Interacts with ESR1; the interaction prevents homodimerization of ESR1 and suppresses its transcriptional activity and cell growth (By similarity). Interacts with NRIP1 (via its LXXLL motifs); the interaction provides corepressor activity. Interacts with HDAC3 (via the DNA-binding domain); the interaction recruits phosphorylated NR2C1 to PML bodies for sumoylation. Interacts with HDAC4 (via the DNA-binding domain). Interacts with PIAS1; the interaction is required for sumoylation of NR2C1. Interacts with UBE2I; the interaction is required for sumoylation of NR2C1. Interacts with KAT2B; the interaction acts as a corepressor of gene expression.</text>
</comment>
<comment type="interaction">
    <interactant intactId="EBI-15617004">
        <id>Q505F1</id>
    </interactant>
    <interactant intactId="EBI-2325611">
        <id>Q9JHD1</id>
        <label>Kat2b</label>
    </interactant>
    <organismsDiffer>false</organismsDiffer>
    <experiments>3</experiments>
</comment>
<comment type="interaction">
    <interactant intactId="EBI-15617004">
        <id>Q505F1</id>
    </interactant>
    <interactant intactId="EBI-1771626">
        <id>Q8CBD1</id>
        <label>Nrip1</label>
    </interactant>
    <organismsDiffer>false</organismsDiffer>
    <experiments>3</experiments>
</comment>
<comment type="interaction">
    <interactant intactId="EBI-15617004">
        <id>Q505F1</id>
    </interactant>
    <interactant intactId="EBI-3508327">
        <id>O88907</id>
        <label>Pias1</label>
    </interactant>
    <organismsDiffer>false</organismsDiffer>
    <experiments>4</experiments>
</comment>
<comment type="interaction">
    <interactant intactId="EBI-15617004">
        <id>Q505F1</id>
    </interactant>
    <interactant intactId="EBI-3895605">
        <id>Q60953</id>
        <label>Pml</label>
    </interactant>
    <organismsDiffer>false</organismsDiffer>
    <experiments>2</experiments>
</comment>
<comment type="interaction">
    <interactant intactId="EBI-15617004">
        <id>Q505F1</id>
    </interactant>
    <interactant intactId="EBI-15719975">
        <id>Q8BSJ6</id>
        <label>Pml</label>
    </interactant>
    <organismsDiffer>false</organismsDiffer>
    <experiments>3</experiments>
</comment>
<comment type="interaction">
    <interactant intactId="EBI-15617004">
        <id>Q505F1</id>
    </interactant>
    <interactant intactId="EBI-80152">
        <id>P63166</id>
        <label>Sumo1</label>
    </interactant>
    <organismsDiffer>false</organismsDiffer>
    <experiments>5</experiments>
</comment>
<comment type="interaction">
    <interactant intactId="EBI-15617004">
        <id>Q505F1</id>
    </interactant>
    <interactant intactId="EBI-80180">
        <id>P63280</id>
        <label>Ube2i</label>
    </interactant>
    <organismsDiffer>false</organismsDiffer>
    <experiments>3</experiments>
</comment>
<comment type="subcellular location">
    <subcellularLocation>
        <location>Nucleus</location>
    </subcellularLocation>
    <subcellularLocation>
        <location>Nucleus</location>
        <location>PML body</location>
    </subcellularLocation>
    <text>Recruited by HDAC3, after all-trans retinoic acid stimulated MAPK1-mediated Thr-210 phosphorylation, to PML bodies for subsequent sumoylation.</text>
</comment>
<comment type="alternative products">
    <event type="alternative splicing"/>
    <isoform>
        <id>Q505F1-1</id>
        <name evidence="21 23 24">1</name>
        <sequence type="displayed"/>
    </isoform>
    <isoform>
        <id>Q505F1-2</id>
        <name evidence="22">2</name>
        <name evidence="26">TR2-11-t</name>
        <name evidence="26">TR2-11-truncated</name>
        <sequence type="described" ref="VSP_051921 VSP_051922"/>
    </isoform>
</comment>
<comment type="tissue specificity">
    <text evidence="7 19 20 21 22 23 24">Isoform 1 is highly expressed in the adlumenal compartment of the seminiferous tubule of adult testes (at protein level) and in the eyes of newborn animals. Weakly expressed in other adult organs including the seminal vesicle, prostate, ovary, adrenal gland, heart, thymus, placenta and brain. Expressed during embryonic stages in developing eyes, brain and cartilage primordia (at protein level). Also expressed in the developing spinal motor neurons and in the sympathetic-, parasympathetic- and sensory ganglia of the embryonic PNS. Expressed in the developing neural epithelia of the inner ear, nasal cavity, tongue and retina. At day 16.5, expressed in various tissues including kidney and intestine. In contrast, isoform 2 is widely expressed at a low level throughout the adult testis.</text>
</comment>
<comment type="developmental stage">
    <text evidence="8 20 21 22">Isoform 1 is highly expressed in early to midgestation embryos, with expression leveling off at 15 dpc. Expressed in yolk sac erythrocytes at 9.5 dpc. After birth, expression in the testes remains at a basal level until puberty, begins to increase at postnatal day 16 (P16) and peaks at P20 to P24. Expression is maintained at a high level throughout adulthood. Isoform 2 peaks transiently at P24.</text>
</comment>
<comment type="induction">
    <text evidence="17 24">By ciliary neurotrophic factor (CNTF). Repressed by vitamin A. Induced by retinoic acid.</text>
</comment>
<comment type="PTM">
    <text>Sumoylation requires both PIAS1 and UBE2I. Sumoylation appears to dissociate NR2C1 from the PML nuclear bodies. Enhances the interaction with NRIP1 but inhibits interaction with KAT2B. In proliferating cells, stimulation by all-trans retinoic acid, activation of MAPK1-mediated phosphorylation and recruitment to PML bodies with subsequent sumoylation, suppresses OCT4 expression.</text>
</comment>
<comment type="PTM">
    <text evidence="9 16">Phosphorylated on several serine and threonine residues. Phosphorylation on Thr-210, stimulated by all-trans retinoic acid (atRA) mediates PML location and sumoylation in proliferating cells which then modulates its association with effector molecules, KAT2B and NRIP1. Phosphorylation on Ser-568 by PKC is important for protein stability and function as activator of RARB.</text>
</comment>
<comment type="disruption phenotype">
    <text evidence="7 17">No visible phenotype. Mice exhibit normal spermatogenesis and testis development, as well as normal central nervous system development. NR2C1 and NR2C2 double null mutants result in early embryonic lethality and increased apoptosis. Embryos die around 7.5 dpc.</text>
</comment>
<comment type="miscellaneous">
    <molecule>Isoform 2</molecule>
    <text evidence="26">Due to intron retention.</text>
</comment>
<comment type="similarity">
    <text evidence="3">Belongs to the nuclear hormone receptor family. NR2 subfamily.</text>
</comment>
<reference evidence="27 30" key="1">
    <citation type="journal article" date="1995" name="Genomics">
        <title>Genomic structure, promoter identification, and chromosomal mapping of a mouse nuclear orphan receptor expressed in embryos and adult testes.</title>
        <authorList>
            <person name="Lee C.-H."/>
            <person name="Copeland N.G."/>
            <person name="Gilbert D.J."/>
            <person name="Jenkins N.A."/>
            <person name="Wei L.-N."/>
        </authorList>
    </citation>
    <scope>NUCLEOTIDE SEQUENCE [GENOMIC DNA]</scope>
    <scope>TISSUE SPECIFICITY</scope>
    <scope>DEVELOPMENTAL STAGE</scope>
    <scope>VARIANTS MET-29; MET-145; 296-PHE--GLN-304 DELINS SER-VAL-LEU-PHE-ILE-MET-ILE-PHE-LYS; ILE-361; ALA-377 AND ALA-456</scope>
    <source>
        <strain evidence="30">CD-1</strain>
        <tissue evidence="20">Embryo</tissue>
    </source>
</reference>
<reference evidence="27 29" key="2">
    <citation type="journal article" date="1996" name="Mol. Reprod. Dev.">
        <title>Molecular cloning and characterization of a mouse nuclear orphan receptor expressed in embryos and testes.</title>
        <authorList>
            <person name="Lee C.-H."/>
            <person name="Chang L."/>
            <person name="Wei L.N."/>
        </authorList>
    </citation>
    <scope>NUCLEOTIDE SEQUENCE [MRNA] (ISOFORM 1)</scope>
    <scope>FUNCTION</scope>
    <scope>TISSUE SPECIFICITY</scope>
    <scope>DEVELOPMENTAL STAGE</scope>
    <scope>VARIANTS MET-29; MET-145; 296-PHE--GLN-304 DELINS SER-VAL-LEU-PHE-ILE-MET-ILE-PHE-LYS; ILE-361; ALA-377 AND ALA-456</scope>
    <source>
        <strain evidence="29">CD-1</strain>
        <tissue evidence="21">Embryo</tissue>
    </source>
</reference>
<reference evidence="27" key="3">
    <citation type="journal article" date="1997" name="J. Endocrinol.">
        <title>Distinct expression patterns and biological activities of two isoforms of the mouse orphan receptor TR2.</title>
        <authorList>
            <person name="Lee C.-H."/>
            <person name="Chang L."/>
            <person name="Wei L.-N."/>
        </authorList>
    </citation>
    <scope>NUCLEOTIDE SEQUENCE [MRNA] (ISOFORM 2)</scope>
    <scope>FUNCTION</scope>
    <scope>TISSUE SPECIFICITY</scope>
    <scope>DEVELOPMENTAL STAGE</scope>
</reference>
<reference evidence="27 34" key="4">
    <citation type="journal article" date="1998" name="Biol. Chem.">
        <title>Polymorphism in the murine Tr2-11 gene encoding an orphan receptor, and its exclusion as a candidate gene for the cataract mutation Cat3.</title>
        <authorList>
            <person name="Immervoll T."/>
            <person name="Adamski J."/>
            <person name="Graw J."/>
        </authorList>
    </citation>
    <scope>NUCLEOTIDE SEQUENCE [MRNA] (ISOFORM 1)</scope>
    <scope>TISSUE SPECIFICITY</scope>
    <source>
        <strain evidence="23">C3H X 102</strain>
    </source>
</reference>
<reference evidence="27 28" key="5">
    <citation type="journal article" date="1998" name="J. Biol. Chem.">
        <title>A bidirectional regulation between the TR2/TR4 orphan receptors (TR2/TR4) and the ciliary neurotrophic factor (CNTF) signaling pathway.</title>
        <authorList>
            <person name="Young W.-J."/>
            <person name="Lee Y.-F."/>
            <person name="Smith S.M."/>
            <person name="Chang C."/>
        </authorList>
    </citation>
    <scope>NUCLEOTIDE SEQUENCE [MRNA] (ISOFORM 1)</scope>
    <scope>TISSUE SPECIFICITY</scope>
    <scope>INDUCTION</scope>
    <source>
        <strain evidence="28">C57BL/6J</strain>
        <tissue evidence="28">Testis</tissue>
    </source>
</reference>
<reference evidence="27 32" key="6">
    <citation type="submission" date="2001-11" db="EMBL/GenBank/DDBJ databases">
        <title>Cloning, antibody production and immunohistochemical localization of an androgen repressed of mouse and rat TR2 orphan receptors: a member of steroid receptor superfamily.</title>
        <authorList>
            <person name="Ideta R."/>
            <person name="Yeh S."/>
            <person name="Lee Y.-F."/>
            <person name="Adachi K."/>
            <person name="Takeda H."/>
            <person name="Su C."/>
            <person name="Chang C."/>
        </authorList>
    </citation>
    <scope>NUCLEOTIDE SEQUENCE [MRNA] (ISOFORM 1)</scope>
    <source>
        <tissue>Testis</tissue>
    </source>
</reference>
<reference evidence="27 33" key="7">
    <citation type="journal article" date="2005" name="Science">
        <title>The transcriptional landscape of the mammalian genome.</title>
        <authorList>
            <person name="Carninci P."/>
            <person name="Kasukawa T."/>
            <person name="Katayama S."/>
            <person name="Gough J."/>
            <person name="Frith M.C."/>
            <person name="Maeda N."/>
            <person name="Oyama R."/>
            <person name="Ravasi T."/>
            <person name="Lenhard B."/>
            <person name="Wells C."/>
            <person name="Kodzius R."/>
            <person name="Shimokawa K."/>
            <person name="Bajic V.B."/>
            <person name="Brenner S.E."/>
            <person name="Batalov S."/>
            <person name="Forrest A.R."/>
            <person name="Zavolan M."/>
            <person name="Davis M.J."/>
            <person name="Wilming L.G."/>
            <person name="Aidinis V."/>
            <person name="Allen J.E."/>
            <person name="Ambesi-Impiombato A."/>
            <person name="Apweiler R."/>
            <person name="Aturaliya R.N."/>
            <person name="Bailey T.L."/>
            <person name="Bansal M."/>
            <person name="Baxter L."/>
            <person name="Beisel K.W."/>
            <person name="Bersano T."/>
            <person name="Bono H."/>
            <person name="Chalk A.M."/>
            <person name="Chiu K.P."/>
            <person name="Choudhary V."/>
            <person name="Christoffels A."/>
            <person name="Clutterbuck D.R."/>
            <person name="Crowe M.L."/>
            <person name="Dalla E."/>
            <person name="Dalrymple B.P."/>
            <person name="de Bono B."/>
            <person name="Della Gatta G."/>
            <person name="di Bernardo D."/>
            <person name="Down T."/>
            <person name="Engstrom P."/>
            <person name="Fagiolini M."/>
            <person name="Faulkner G."/>
            <person name="Fletcher C.F."/>
            <person name="Fukushima T."/>
            <person name="Furuno M."/>
            <person name="Futaki S."/>
            <person name="Gariboldi M."/>
            <person name="Georgii-Hemming P."/>
            <person name="Gingeras T.R."/>
            <person name="Gojobori T."/>
            <person name="Green R.E."/>
            <person name="Gustincich S."/>
            <person name="Harbers M."/>
            <person name="Hayashi Y."/>
            <person name="Hensch T.K."/>
            <person name="Hirokawa N."/>
            <person name="Hill D."/>
            <person name="Huminiecki L."/>
            <person name="Iacono M."/>
            <person name="Ikeo K."/>
            <person name="Iwama A."/>
            <person name="Ishikawa T."/>
            <person name="Jakt M."/>
            <person name="Kanapin A."/>
            <person name="Katoh M."/>
            <person name="Kawasawa Y."/>
            <person name="Kelso J."/>
            <person name="Kitamura H."/>
            <person name="Kitano H."/>
            <person name="Kollias G."/>
            <person name="Krishnan S.P."/>
            <person name="Kruger A."/>
            <person name="Kummerfeld S.K."/>
            <person name="Kurochkin I.V."/>
            <person name="Lareau L.F."/>
            <person name="Lazarevic D."/>
            <person name="Lipovich L."/>
            <person name="Liu J."/>
            <person name="Liuni S."/>
            <person name="McWilliam S."/>
            <person name="Madan Babu M."/>
            <person name="Madera M."/>
            <person name="Marchionni L."/>
            <person name="Matsuda H."/>
            <person name="Matsuzawa S."/>
            <person name="Miki H."/>
            <person name="Mignone F."/>
            <person name="Miyake S."/>
            <person name="Morris K."/>
            <person name="Mottagui-Tabar S."/>
            <person name="Mulder N."/>
            <person name="Nakano N."/>
            <person name="Nakauchi H."/>
            <person name="Ng P."/>
            <person name="Nilsson R."/>
            <person name="Nishiguchi S."/>
            <person name="Nishikawa S."/>
            <person name="Nori F."/>
            <person name="Ohara O."/>
            <person name="Okazaki Y."/>
            <person name="Orlando V."/>
            <person name="Pang K.C."/>
            <person name="Pavan W.J."/>
            <person name="Pavesi G."/>
            <person name="Pesole G."/>
            <person name="Petrovsky N."/>
            <person name="Piazza S."/>
            <person name="Reed J."/>
            <person name="Reid J.F."/>
            <person name="Ring B.Z."/>
            <person name="Ringwald M."/>
            <person name="Rost B."/>
            <person name="Ruan Y."/>
            <person name="Salzberg S.L."/>
            <person name="Sandelin A."/>
            <person name="Schneider C."/>
            <person name="Schoenbach C."/>
            <person name="Sekiguchi K."/>
            <person name="Semple C.A."/>
            <person name="Seno S."/>
            <person name="Sessa L."/>
            <person name="Sheng Y."/>
            <person name="Shibata Y."/>
            <person name="Shimada H."/>
            <person name="Shimada K."/>
            <person name="Silva D."/>
            <person name="Sinclair B."/>
            <person name="Sperling S."/>
            <person name="Stupka E."/>
            <person name="Sugiura K."/>
            <person name="Sultana R."/>
            <person name="Takenaka Y."/>
            <person name="Taki K."/>
            <person name="Tammoja K."/>
            <person name="Tan S.L."/>
            <person name="Tang S."/>
            <person name="Taylor M.S."/>
            <person name="Tegner J."/>
            <person name="Teichmann S.A."/>
            <person name="Ueda H.R."/>
            <person name="van Nimwegen E."/>
            <person name="Verardo R."/>
            <person name="Wei C.L."/>
            <person name="Yagi K."/>
            <person name="Yamanishi H."/>
            <person name="Zabarovsky E."/>
            <person name="Zhu S."/>
            <person name="Zimmer A."/>
            <person name="Hide W."/>
            <person name="Bult C."/>
            <person name="Grimmond S.M."/>
            <person name="Teasdale R.D."/>
            <person name="Liu E.T."/>
            <person name="Brusic V."/>
            <person name="Quackenbush J."/>
            <person name="Wahlestedt C."/>
            <person name="Mattick J.S."/>
            <person name="Hume D.A."/>
            <person name="Kai C."/>
            <person name="Sasaki D."/>
            <person name="Tomaru Y."/>
            <person name="Fukuda S."/>
            <person name="Kanamori-Katayama M."/>
            <person name="Suzuki M."/>
            <person name="Aoki J."/>
            <person name="Arakawa T."/>
            <person name="Iida J."/>
            <person name="Imamura K."/>
            <person name="Itoh M."/>
            <person name="Kato T."/>
            <person name="Kawaji H."/>
            <person name="Kawagashira N."/>
            <person name="Kawashima T."/>
            <person name="Kojima M."/>
            <person name="Kondo S."/>
            <person name="Konno H."/>
            <person name="Nakano K."/>
            <person name="Ninomiya N."/>
            <person name="Nishio T."/>
            <person name="Okada M."/>
            <person name="Plessy C."/>
            <person name="Shibata K."/>
            <person name="Shiraki T."/>
            <person name="Suzuki S."/>
            <person name="Tagami M."/>
            <person name="Waki K."/>
            <person name="Watahiki A."/>
            <person name="Okamura-Oho Y."/>
            <person name="Suzuki H."/>
            <person name="Kawai J."/>
            <person name="Hayashizaki Y."/>
        </authorList>
    </citation>
    <scope>NUCLEOTIDE SEQUENCE [LARGE SCALE MRNA] (ISOFORM 1)</scope>
    <source>
        <strain evidence="33">C57BL/6J</strain>
        <tissue evidence="10">Embryonic kidney</tissue>
        <tissue evidence="33">Liver tumor</tissue>
    </source>
</reference>
<reference key="8">
    <citation type="journal article" date="2009" name="PLoS Biol.">
        <title>Lineage-specific biology revealed by a finished genome assembly of the mouse.</title>
        <authorList>
            <person name="Church D.M."/>
            <person name="Goodstadt L."/>
            <person name="Hillier L.W."/>
            <person name="Zody M.C."/>
            <person name="Goldstein S."/>
            <person name="She X."/>
            <person name="Bult C.J."/>
            <person name="Agarwala R."/>
            <person name="Cherry J.L."/>
            <person name="DiCuccio M."/>
            <person name="Hlavina W."/>
            <person name="Kapustin Y."/>
            <person name="Meric P."/>
            <person name="Maglott D."/>
            <person name="Birtle Z."/>
            <person name="Marques A.C."/>
            <person name="Graves T."/>
            <person name="Zhou S."/>
            <person name="Teague B."/>
            <person name="Potamousis K."/>
            <person name="Churas C."/>
            <person name="Place M."/>
            <person name="Herschleb J."/>
            <person name="Runnheim R."/>
            <person name="Forrest D."/>
            <person name="Amos-Landgraf J."/>
            <person name="Schwartz D.C."/>
            <person name="Cheng Z."/>
            <person name="Lindblad-Toh K."/>
            <person name="Eichler E.E."/>
            <person name="Ponting C.P."/>
        </authorList>
    </citation>
    <scope>NUCLEOTIDE SEQUENCE [LARGE SCALE GENOMIC DNA]</scope>
    <source>
        <strain>C57BL/6J</strain>
    </source>
</reference>
<reference evidence="27 31" key="9">
    <citation type="journal article" date="2004" name="Genome Res.">
        <title>The status, quality, and expansion of the NIH full-length cDNA project: the Mammalian Gene Collection (MGC).</title>
        <authorList>
            <consortium name="The MGC Project Team"/>
        </authorList>
    </citation>
    <scope>NUCLEOTIDE SEQUENCE [LARGE SCALE MRNA] (ISOFORM 1)</scope>
    <source>
        <strain evidence="31">C57BL/6J</strain>
        <tissue evidence="31">Eye</tissue>
    </source>
</reference>
<reference key="10">
    <citation type="journal article" date="1995" name="J. Biol. Chem.">
        <title>Multiple functions of the TR2-11 orphan receptor in modulating activation of two key cis-acting elements involved in the retinoic acid signal transduction system.</title>
        <authorList>
            <person name="Lin T.M."/>
            <person name="Young W.J."/>
            <person name="Chang C."/>
        </authorList>
    </citation>
    <scope>DNA-BINDING</scope>
    <scope>FUNCTION</scope>
    <scope>TISSUE SPECIFICITY</scope>
</reference>
<reference evidence="27" key="11">
    <citation type="journal article" date="1997" name="Biochemistry">
        <title>The orphan nuclear receptor TR2 suppresses a DR4 hormone response element of the mouse CRABP-I gene promoter.</title>
        <authorList>
            <person name="Chinpaisal C."/>
            <person name="Chang L."/>
            <person name="Hu X."/>
            <person name="Lee C.-H."/>
            <person name="Wen W.-N."/>
            <person name="Wei L.-N."/>
        </authorList>
    </citation>
    <scope>DNA-BINDING</scope>
    <scope>HOMODIMERIZATION</scope>
</reference>
<reference evidence="27" key="12">
    <citation type="journal article" date="1998" name="Mol. Cell. Biol.">
        <title>Cloning and characterization of mouse RIP140, a corepressor for nuclear orphan receptor TR2.</title>
        <authorList>
            <person name="Lee C.-H."/>
            <person name="Chinpaisal C."/>
            <person name="Wei L.-N."/>
        </authorList>
    </citation>
    <scope>FUNCTION</scope>
    <scope>SUBCELLULAR LOCATION</scope>
    <scope>INTERACTION WITH NRIP1</scope>
</reference>
<reference evidence="27" key="13">
    <citation type="journal article" date="2001" name="Mol. Endocrinol.">
        <title>The orphan nuclear receptor TR2 interacts directly with both class I and class II histone deacetylases.</title>
        <authorList>
            <person name="Franco P.J."/>
            <person name="Farooqui M."/>
            <person name="Seto E."/>
            <person name="Wei L.-N."/>
        </authorList>
    </citation>
    <scope>FUNCTION</scope>
    <scope>INTERACTION WITH HDAC3 AND HDAC4</scope>
</reference>
<reference key="14">
    <citation type="journal article" date="2002" name="EMBO J.">
        <title>An embryonic/fetal beta-type globin gene repressor contains a nuclear receptor TR2/TR4 heterodimer.</title>
        <authorList>
            <person name="Tanabe O."/>
            <person name="Katsuoka F."/>
            <person name="Campbell A.D."/>
            <person name="Song W."/>
            <person name="Yamamoto M."/>
            <person name="Tanimoto K."/>
            <person name="Engel J.D."/>
        </authorList>
    </citation>
    <scope>IDENTIFICATION BY MASS SPECTROMETRY IN DRED COMPLEX</scope>
    <scope>FUNCTION</scope>
    <scope>SUBCELLULAR LOCATION</scope>
    <scope>HETERODIMERIZATION</scope>
    <scope>DEVELOPMENTAL STAGE</scope>
</reference>
<reference key="15">
    <citation type="journal article" date="2002" name="Mol. Cell. Biol.">
        <title>Spermatogenesis and testis development are normal in mice lacking testicular orphan nuclear receptor 2.</title>
        <authorList>
            <person name="Shyr C.R."/>
            <person name="Collins L.L."/>
            <person name="Mu X.M."/>
            <person name="Platt K.A."/>
            <person name="Chang C."/>
        </authorList>
    </citation>
    <scope>DISRUPTION PHENOTYPE</scope>
    <scope>TISSUE SPECIFICITY</scope>
</reference>
<reference key="16">
    <citation type="journal article" date="2005" name="Proteomics">
        <title>Protein kinase C-mediated phosphorylation of orphan nuclear receptor TR2: effects on receptor stability and activity.</title>
        <authorList>
            <person name="Khan S.A."/>
            <person name="Park S.W."/>
            <person name="Huq M."/>
            <person name="Wei L.N."/>
        </authorList>
    </citation>
    <scope>PHOSPHORYLATION AT SER-461 AND SER-568</scope>
    <scope>FUNCTION</scope>
    <scope>IDENTIFICATION BY MASS SPECTROMETRY</scope>
</reference>
<reference key="17">
    <citation type="journal article" date="2006" name="Proteomics">
        <title>Ligand-independent orphan receptor TR2 activation by phosphorylation at the DNA-binding domain.</title>
        <authorList>
            <person name="Khan S.A."/>
            <person name="Park S.W."/>
            <person name="Huq M.D."/>
            <person name="Wei L.N."/>
        </authorList>
    </citation>
    <scope>PHOSPHORYLATION AT SER-185</scope>
    <scope>DNA-BINDING</scope>
    <scope>FUNCTION</scope>
    <scope>INTERACTION WITH KAT2B</scope>
    <scope>MUTAGENESIS OF SER-170 AND SER-185</scope>
</reference>
<reference key="18">
    <citation type="journal article" date="2007" name="EMBO J.">
        <title>Embryonic and fetal beta-globin gene repression by the orphan nuclear receptors, TR2 and TR4.</title>
        <authorList>
            <person name="Tanabe O."/>
            <person name="McPhee D."/>
            <person name="Kobayashi S."/>
            <person name="Shen Y."/>
            <person name="Brandt W."/>
            <person name="Jiang X."/>
            <person name="Campbell A.D."/>
            <person name="Chen Y.T."/>
            <person name="Chang C."/>
            <person name="Yamamoto M."/>
            <person name="Tanimoto K."/>
            <person name="Engel J.D."/>
        </authorList>
    </citation>
    <scope>FUNCTION</scope>
    <scope>HETERODIMERIZATION</scope>
</reference>
<reference key="19">
    <citation type="journal article" date="2007" name="Genes Dev.">
        <title>The TR2 and TR4 orphan nuclear receptors repress Gata1 transcription.</title>
        <authorList>
            <person name="Tanabe O."/>
            <person name="Shen Y."/>
            <person name="Liu Q."/>
            <person name="Campbell A.D."/>
            <person name="Kuroha T."/>
            <person name="Yamamoto M."/>
            <person name="Engel J.D."/>
        </authorList>
    </citation>
    <scope>HETERODIMERIZATION</scope>
    <scope>FUNCTION</scope>
</reference>
<reference key="20">
    <citation type="journal article" date="2007" name="Nat. Struct. Mol. Biol.">
        <title>SUMOylation of Tr2 orphan receptor involves Pml and fine-tunes Oct4 expression in stem cells.</title>
        <authorList>
            <person name="Park S.W."/>
            <person name="Hu X."/>
            <person name="Gupta P."/>
            <person name="Lin Y.P."/>
            <person name="Ha S.G."/>
            <person name="Wei L.N."/>
        </authorList>
    </citation>
    <scope>SUMOYLATION AT LYS-238</scope>
    <scope>SUBCELLULAR LOCATION</scope>
    <scope>FUNCTION</scope>
    <scope>INTERACTION WITH KAT2B; NRIP1; PIAS1 AND UBE2I</scope>
    <scope>MUTAGENESIS OF LYS-167; LYS-238; GLU-240 AND LYS-575</scope>
</reference>
<reference key="21">
    <citation type="journal article" date="2007" name="Nucleic Acids Res.">
        <title>Orphan nuclear receptor TR2, a mediator of preadipocyte proliferation, is differentially regulated by RA through exchange of coactivator PCAF with corepressor RIP140 on a platform molecule GRIP1.</title>
        <authorList>
            <person name="Gupta P."/>
            <person name="Park S.W."/>
            <person name="Farooqui M."/>
            <person name="Wei L.N."/>
        </authorList>
    </citation>
    <scope>FUNCTION</scope>
</reference>
<reference key="22">
    <citation type="journal article" date="2008" name="Proc. Natl. Acad. Sci. U.S.A.">
        <title>Retinoic acid-stimulated sequential phosphorylation, PML recruitment, and SUMOylation of nuclear receptor TR2 to suppress Oct4 expression.</title>
        <authorList>
            <person name="Gupta P."/>
            <person name="Ho P.C."/>
            <person name="Huq M.M."/>
            <person name="Ha S.G."/>
            <person name="Park S.W."/>
            <person name="Khan A.A."/>
            <person name="Tsai N.P."/>
            <person name="Wei L.N."/>
        </authorList>
    </citation>
    <scope>PHOSPHORYLATION AT SER-203; THR-208 AND THR-210</scope>
    <scope>SUMOYLATION</scope>
    <scope>INTERACTION WITH KAT2B</scope>
    <scope>MUTAGENESIS OF SER-170; SER-185; SER-203; THR-208; THR-210; LYS-238; SER-461 AND SER-568</scope>
    <scope>IDENTIFICATION BY MASS SPECTROMETRY</scope>
</reference>
<reference key="23">
    <citation type="journal article" date="2009" name="Endocrinology">
        <title>Roles of testicular orphan nuclear receptors 2 and 4 in early embryonic development and embryonic stem cells.</title>
        <authorList>
            <person name="Shyr C.R."/>
            <person name="Kang H.Y."/>
            <person name="Tsai M.Y."/>
            <person name="Liu N.C."/>
            <person name="Ku P.Y."/>
            <person name="Huang K.E."/>
            <person name="Chang C."/>
        </authorList>
    </citation>
    <scope>DISRUPTION PHENOTYPE</scope>
    <scope>INDUCTION</scope>
    <scope>FUNCTION</scope>
</reference>
<reference key="24">
    <citation type="journal article" date="2009" name="PLoS ONE">
        <title>HDAC3 as a molecular chaperone for shuttling phosphorylated TR2 to PML: a novel deacetylase activity-independent function of HDAC3.</title>
        <authorList>
            <person name="Gupta P."/>
            <person name="Ho P.C."/>
            <person name="Ha S.G."/>
            <person name="Lin Y.W."/>
            <person name="Wei L.N."/>
        </authorList>
    </citation>
    <scope>SUMOYLATION</scope>
    <scope>INTERACTION WITH HDAC3</scope>
    <scope>SUBCELLULAR LOCATION</scope>
</reference>
<gene>
    <name evidence="35" type="primary">Nr2c1</name>
    <name type="synonym">Tr2</name>
    <name evidence="30" type="synonym">Tr2-11</name>
</gene>
<sequence>MATIEEIAHQIIDQQMGEIVTEQQTGQKIQIVTALDHSTQGKQFILANHEGSTPGKVFLTTPDAAGVNQLFFTSPDLSAPHLQLLTEKSPDQGPNKVFDLCVVCGDKASGRHYGAITCEGCKGFFKRSIRKNLVYSCRGSKDCVINKHHRNRCQYCRLQRCIAFGMKQDSVQCERKPIEVSREKSSNCAASTEKIYIRKDLRSPLAATPTFVTDSETARSAGLLDSGMFVNIHPSGIKTEPAMLMAPDKAESCQGDLSTLASVVTSLANLGKAKDLSHCGGDMPVVQSLRNGDTSFGAFHHDIQTNGDVSRAFDTLAKALTPGESSACQSPEEGMEGSPHLIAGEPSFVEKEGPLLSESHVAFRLTMPSPMPEYLNVHYIGESASRLLFLSMHWALSIPSFQALGQENSISLVKAYWNELFTLGLAQCWQVMNVATILATFVNCLHSSLQQDKMSPERRKSLMEHIFKLQEFCNSMVKLCIDGHEYAYLKAIVLFSPDHPGLENMELIERFQEKAYVEFQDYITRTYPDDTYRLSRLLLRLPALRLMNATITEELFFKGLIGNVRIDSVIPHILKMEPADYNSQIIGHSL</sequence>
<protein>
    <recommendedName>
        <fullName>Nuclear receptor subfamily 2 group C member 1</fullName>
    </recommendedName>
    <alternativeName>
        <fullName>Orphan nuclear receptor TR2</fullName>
    </alternativeName>
    <alternativeName>
        <fullName>Testicular receptor 2</fullName>
        <shortName>mTR2</shortName>
    </alternativeName>
</protein>
<accession>Q505F1</accession>
<accession>P97763</accession>
<accession>Q0VGP8</accession>
<accession>Q3UIJ7</accession>
<accession>Q4U1Z4</accession>
<accession>Q60927</accession>
<accession>Q62152</accession>
<accession>Q8VIJ3</accession>
<name>NR2C1_MOUSE</name>